<comment type="function">
    <text evidence="2 3">Metal-dependent single-stranded DNA (ssDNA) exonuclease involved in mitochondrial genome maintenance. Has preference for 5'-3' exonuclease activity but is also capable of endonuclease activity on linear substrates. Necessary for maintenance of proper 7S DNA levels. Probably involved in mitochondrial DNA (mtDNA) repair, possibly via the processing of displaced DNA containing Okazaki fragments during RNA-primed DNA synthesis on the lagging strand or via processing of DNA flaps during long-patch base excision repair (By similarity). Specifically binds 5-hydroxymethylcytosine (5hmC)-containing DNA in stem cells.</text>
</comment>
<comment type="subcellular location">
    <subcellularLocation>
        <location evidence="2">Mitochondrion</location>
    </subcellularLocation>
</comment>
<comment type="similarity">
    <text evidence="2">Belongs to the MGME1 family.</text>
</comment>
<organism>
    <name type="scientific">Mus musculus</name>
    <name type="common">Mouse</name>
    <dbReference type="NCBI Taxonomy" id="10090"/>
    <lineage>
        <taxon>Eukaryota</taxon>
        <taxon>Metazoa</taxon>
        <taxon>Chordata</taxon>
        <taxon>Craniata</taxon>
        <taxon>Vertebrata</taxon>
        <taxon>Euteleostomi</taxon>
        <taxon>Mammalia</taxon>
        <taxon>Eutheria</taxon>
        <taxon>Euarchontoglires</taxon>
        <taxon>Glires</taxon>
        <taxon>Rodentia</taxon>
        <taxon>Myomorpha</taxon>
        <taxon>Muroidea</taxon>
        <taxon>Muridae</taxon>
        <taxon>Murinae</taxon>
        <taxon>Mus</taxon>
        <taxon>Mus</taxon>
    </lineage>
</organism>
<name>MGME1_MOUSE</name>
<dbReference type="EC" id="3.1.-.-" evidence="2"/>
<dbReference type="EMBL" id="AK018387">
    <property type="protein sequence ID" value="BAB31189.1"/>
    <property type="molecule type" value="mRNA"/>
</dbReference>
<dbReference type="EMBL" id="AK031535">
    <property type="protein sequence ID" value="BAC27439.1"/>
    <property type="molecule type" value="mRNA"/>
</dbReference>
<dbReference type="EMBL" id="AK043140">
    <property type="protein sequence ID" value="BAC31474.1"/>
    <property type="molecule type" value="mRNA"/>
</dbReference>
<dbReference type="EMBL" id="AK049565">
    <property type="protein sequence ID" value="BAC33813.1"/>
    <property type="molecule type" value="mRNA"/>
</dbReference>
<dbReference type="EMBL" id="AK159286">
    <property type="protein sequence ID" value="BAE34962.1"/>
    <property type="molecule type" value="mRNA"/>
</dbReference>
<dbReference type="EMBL" id="AK167919">
    <property type="protein sequence ID" value="BAE39926.1"/>
    <property type="molecule type" value="mRNA"/>
</dbReference>
<dbReference type="EMBL" id="AL808123">
    <property type="status" value="NOT_ANNOTATED_CDS"/>
    <property type="molecule type" value="Genomic_DNA"/>
</dbReference>
<dbReference type="EMBL" id="BC063088">
    <property type="protein sequence ID" value="AAH63088.1"/>
    <property type="molecule type" value="mRNA"/>
</dbReference>
<dbReference type="CCDS" id="CCDS16816.1"/>
<dbReference type="RefSeq" id="NP_001276559.1">
    <property type="nucleotide sequence ID" value="NM_001289630.1"/>
</dbReference>
<dbReference type="RefSeq" id="NP_001276560.1">
    <property type="nucleotide sequence ID" value="NM_001289631.1"/>
</dbReference>
<dbReference type="RefSeq" id="NP_001342617.1">
    <property type="nucleotide sequence ID" value="NM_001355688.1"/>
</dbReference>
<dbReference type="RefSeq" id="NP_083260.1">
    <property type="nucleotide sequence ID" value="NM_028984.5"/>
</dbReference>
<dbReference type="RefSeq" id="XP_006500365.1">
    <property type="nucleotide sequence ID" value="XM_006500302.2"/>
</dbReference>
<dbReference type="SMR" id="Q9CXC3"/>
<dbReference type="FunCoup" id="Q9CXC3">
    <property type="interactions" value="2355"/>
</dbReference>
<dbReference type="STRING" id="10090.ENSMUSP00000028910"/>
<dbReference type="PhosphoSitePlus" id="Q9CXC3"/>
<dbReference type="PaxDb" id="10090-ENSMUSP00000028910"/>
<dbReference type="PeptideAtlas" id="Q9CXC3"/>
<dbReference type="ProteomicsDB" id="295938"/>
<dbReference type="Pumba" id="Q9CXC3"/>
<dbReference type="Antibodypedia" id="48613">
    <property type="antibodies" value="80 antibodies from 19 providers"/>
</dbReference>
<dbReference type="DNASU" id="74528"/>
<dbReference type="Ensembl" id="ENSMUST00000028910.9">
    <property type="protein sequence ID" value="ENSMUSP00000028910.3"/>
    <property type="gene ID" value="ENSMUSG00000027424.12"/>
</dbReference>
<dbReference type="Ensembl" id="ENSMUST00000110027.2">
    <property type="protein sequence ID" value="ENSMUSP00000105654.2"/>
    <property type="gene ID" value="ENSMUSG00000027424.12"/>
</dbReference>
<dbReference type="Ensembl" id="ENSMUST00000110028.8">
    <property type="protein sequence ID" value="ENSMUSP00000105655.2"/>
    <property type="gene ID" value="ENSMUSG00000027424.12"/>
</dbReference>
<dbReference type="GeneID" id="74528"/>
<dbReference type="KEGG" id="mmu:74528"/>
<dbReference type="UCSC" id="uc008mqs.2">
    <property type="organism name" value="mouse"/>
</dbReference>
<dbReference type="AGR" id="MGI:1921778"/>
<dbReference type="CTD" id="92667"/>
<dbReference type="MGI" id="MGI:1921778">
    <property type="gene designation" value="Mgme1"/>
</dbReference>
<dbReference type="VEuPathDB" id="HostDB:ENSMUSG00000027424"/>
<dbReference type="eggNOG" id="ENOG502QVKE">
    <property type="taxonomic scope" value="Eukaryota"/>
</dbReference>
<dbReference type="GeneTree" id="ENSGT00390000003349"/>
<dbReference type="HOGENOM" id="CLU_068902_0_0_1"/>
<dbReference type="InParanoid" id="Q9CXC3"/>
<dbReference type="OMA" id="DCVAKYQ"/>
<dbReference type="OrthoDB" id="5777131at2759"/>
<dbReference type="PhylomeDB" id="Q9CXC3"/>
<dbReference type="TreeFam" id="TF320375"/>
<dbReference type="BioGRID-ORCS" id="74528">
    <property type="hits" value="1 hit in 113 CRISPR screens"/>
</dbReference>
<dbReference type="ChiTaRS" id="Mgme1">
    <property type="organism name" value="mouse"/>
</dbReference>
<dbReference type="PRO" id="PR:Q9CXC3"/>
<dbReference type="Proteomes" id="UP000000589">
    <property type="component" value="Chromosome 2"/>
</dbReference>
<dbReference type="RNAct" id="Q9CXC3">
    <property type="molecule type" value="protein"/>
</dbReference>
<dbReference type="Bgee" id="ENSMUSG00000027424">
    <property type="expression patterns" value="Expressed in interventricular septum and 189 other cell types or tissues"/>
</dbReference>
<dbReference type="GO" id="GO:0005739">
    <property type="term" value="C:mitochondrion"/>
    <property type="evidence" value="ECO:0007005"/>
    <property type="project" value="MGI"/>
</dbReference>
<dbReference type="GO" id="GO:0045145">
    <property type="term" value="F:single-stranded DNA 5'-3' DNA exonuclease activity"/>
    <property type="evidence" value="ECO:0000250"/>
    <property type="project" value="UniProtKB"/>
</dbReference>
<dbReference type="GO" id="GO:0043504">
    <property type="term" value="P:mitochondrial DNA repair"/>
    <property type="evidence" value="ECO:0000250"/>
    <property type="project" value="UniProtKB"/>
</dbReference>
<dbReference type="GO" id="GO:0006264">
    <property type="term" value="P:mitochondrial DNA replication"/>
    <property type="evidence" value="ECO:0007669"/>
    <property type="project" value="Ensembl"/>
</dbReference>
<dbReference type="GO" id="GO:0000002">
    <property type="term" value="P:mitochondrial genome maintenance"/>
    <property type="evidence" value="ECO:0000250"/>
    <property type="project" value="UniProtKB"/>
</dbReference>
<dbReference type="FunFam" id="3.90.320.10:FF:000005">
    <property type="entry name" value="Mitochondrial genome maintenance exonuclease 1"/>
    <property type="match status" value="1"/>
</dbReference>
<dbReference type="Gene3D" id="3.90.320.10">
    <property type="match status" value="1"/>
</dbReference>
<dbReference type="HAMAP" id="MF_03030">
    <property type="entry name" value="MGME1"/>
    <property type="match status" value="1"/>
</dbReference>
<dbReference type="InterPro" id="IPR011604">
    <property type="entry name" value="PDDEXK-like_dom_sf"/>
</dbReference>
<dbReference type="InterPro" id="IPR038726">
    <property type="entry name" value="PDDEXK_AddAB-type"/>
</dbReference>
<dbReference type="PANTHER" id="PTHR31340">
    <property type="entry name" value="MITOCHONDRIAL GENOME MAINTENANCE EXONUCLEASE 1"/>
    <property type="match status" value="1"/>
</dbReference>
<dbReference type="PANTHER" id="PTHR31340:SF3">
    <property type="entry name" value="MITOCHONDRIAL GENOME MAINTENANCE EXONUCLEASE 1"/>
    <property type="match status" value="1"/>
</dbReference>
<dbReference type="Pfam" id="PF12705">
    <property type="entry name" value="PDDEXK_1"/>
    <property type="match status" value="1"/>
</dbReference>
<accession>Q9CXC3</accession>
<accession>A2ANA5</accession>
<accession>Q3TIC0</accession>
<accession>Q543Z8</accession>
<evidence type="ECO:0000250" key="1"/>
<evidence type="ECO:0000255" key="2">
    <source>
        <dbReference type="HAMAP-Rule" id="MF_03030"/>
    </source>
</evidence>
<evidence type="ECO:0000269" key="3">
    <source>
    </source>
</evidence>
<evidence type="ECO:0000305" key="4"/>
<feature type="transit peptide" description="Mitochondrion" evidence="2">
    <location>
        <begin position="1"/>
        <end position="64"/>
    </location>
</feature>
<feature type="chain" id="PRO_0000079440" description="Mitochondrial genome maintenance exonuclease 1">
    <location>
        <begin position="65"/>
        <end position="338"/>
    </location>
</feature>
<feature type="active site" evidence="1">
    <location>
        <position position="235"/>
    </location>
</feature>
<feature type="active site" evidence="1">
    <location>
        <position position="248"/>
    </location>
</feature>
<feature type="active site" evidence="1">
    <location>
        <position position="250"/>
    </location>
</feature>
<feature type="sequence conflict" description="In Ref. 1; BAE39926." evidence="4" ref="1">
    <original>I</original>
    <variation>M</variation>
    <location>
        <position position="213"/>
    </location>
</feature>
<proteinExistence type="evidence at transcript level"/>
<protein>
    <recommendedName>
        <fullName evidence="2">Mitochondrial genome maintenance exonuclease 1</fullName>
        <ecNumber evidence="2">3.1.-.-</ecNumber>
    </recommendedName>
</protein>
<sequence>MKLPLTFCRLLSRLNRFSVKASPPVSFSTFSYLCSQKKKNSYEAVDQAKYSRLVRSVLSRGPAQTPESLFKEDDVLYGPVSKHKAAEPEPQARVPQHCFPIFNEERTGKPHTDASSSPLKIPLQRNSIPSVTRILQQTMPPEQSFFLERWKERMVLELGEDGFAEYTSNVFLQGKQFHKALESILSPQENLTGGEEHPQCGYIESIQHILTEISGVQALESAVQHEALKYVGLLDCVAEYRGKLCVIDWKTSEKPKPLIRNTYDNPLQVVAYMGAVNHDAHYSFQVQCGLIVVAYKDGSPAHPHFMDEELCSKYWAKWLLRLEEYTEKQKNLSAPEPA</sequence>
<reference key="1">
    <citation type="journal article" date="2005" name="Science">
        <title>The transcriptional landscape of the mammalian genome.</title>
        <authorList>
            <person name="Carninci P."/>
            <person name="Kasukawa T."/>
            <person name="Katayama S."/>
            <person name="Gough J."/>
            <person name="Frith M.C."/>
            <person name="Maeda N."/>
            <person name="Oyama R."/>
            <person name="Ravasi T."/>
            <person name="Lenhard B."/>
            <person name="Wells C."/>
            <person name="Kodzius R."/>
            <person name="Shimokawa K."/>
            <person name="Bajic V.B."/>
            <person name="Brenner S.E."/>
            <person name="Batalov S."/>
            <person name="Forrest A.R."/>
            <person name="Zavolan M."/>
            <person name="Davis M.J."/>
            <person name="Wilming L.G."/>
            <person name="Aidinis V."/>
            <person name="Allen J.E."/>
            <person name="Ambesi-Impiombato A."/>
            <person name="Apweiler R."/>
            <person name="Aturaliya R.N."/>
            <person name="Bailey T.L."/>
            <person name="Bansal M."/>
            <person name="Baxter L."/>
            <person name="Beisel K.W."/>
            <person name="Bersano T."/>
            <person name="Bono H."/>
            <person name="Chalk A.M."/>
            <person name="Chiu K.P."/>
            <person name="Choudhary V."/>
            <person name="Christoffels A."/>
            <person name="Clutterbuck D.R."/>
            <person name="Crowe M.L."/>
            <person name="Dalla E."/>
            <person name="Dalrymple B.P."/>
            <person name="de Bono B."/>
            <person name="Della Gatta G."/>
            <person name="di Bernardo D."/>
            <person name="Down T."/>
            <person name="Engstrom P."/>
            <person name="Fagiolini M."/>
            <person name="Faulkner G."/>
            <person name="Fletcher C.F."/>
            <person name="Fukushima T."/>
            <person name="Furuno M."/>
            <person name="Futaki S."/>
            <person name="Gariboldi M."/>
            <person name="Georgii-Hemming P."/>
            <person name="Gingeras T.R."/>
            <person name="Gojobori T."/>
            <person name="Green R.E."/>
            <person name="Gustincich S."/>
            <person name="Harbers M."/>
            <person name="Hayashi Y."/>
            <person name="Hensch T.K."/>
            <person name="Hirokawa N."/>
            <person name="Hill D."/>
            <person name="Huminiecki L."/>
            <person name="Iacono M."/>
            <person name="Ikeo K."/>
            <person name="Iwama A."/>
            <person name="Ishikawa T."/>
            <person name="Jakt M."/>
            <person name="Kanapin A."/>
            <person name="Katoh M."/>
            <person name="Kawasawa Y."/>
            <person name="Kelso J."/>
            <person name="Kitamura H."/>
            <person name="Kitano H."/>
            <person name="Kollias G."/>
            <person name="Krishnan S.P."/>
            <person name="Kruger A."/>
            <person name="Kummerfeld S.K."/>
            <person name="Kurochkin I.V."/>
            <person name="Lareau L.F."/>
            <person name="Lazarevic D."/>
            <person name="Lipovich L."/>
            <person name="Liu J."/>
            <person name="Liuni S."/>
            <person name="McWilliam S."/>
            <person name="Madan Babu M."/>
            <person name="Madera M."/>
            <person name="Marchionni L."/>
            <person name="Matsuda H."/>
            <person name="Matsuzawa S."/>
            <person name="Miki H."/>
            <person name="Mignone F."/>
            <person name="Miyake S."/>
            <person name="Morris K."/>
            <person name="Mottagui-Tabar S."/>
            <person name="Mulder N."/>
            <person name="Nakano N."/>
            <person name="Nakauchi H."/>
            <person name="Ng P."/>
            <person name="Nilsson R."/>
            <person name="Nishiguchi S."/>
            <person name="Nishikawa S."/>
            <person name="Nori F."/>
            <person name="Ohara O."/>
            <person name="Okazaki Y."/>
            <person name="Orlando V."/>
            <person name="Pang K.C."/>
            <person name="Pavan W.J."/>
            <person name="Pavesi G."/>
            <person name="Pesole G."/>
            <person name="Petrovsky N."/>
            <person name="Piazza S."/>
            <person name="Reed J."/>
            <person name="Reid J.F."/>
            <person name="Ring B.Z."/>
            <person name="Ringwald M."/>
            <person name="Rost B."/>
            <person name="Ruan Y."/>
            <person name="Salzberg S.L."/>
            <person name="Sandelin A."/>
            <person name="Schneider C."/>
            <person name="Schoenbach C."/>
            <person name="Sekiguchi K."/>
            <person name="Semple C.A."/>
            <person name="Seno S."/>
            <person name="Sessa L."/>
            <person name="Sheng Y."/>
            <person name="Shibata Y."/>
            <person name="Shimada H."/>
            <person name="Shimada K."/>
            <person name="Silva D."/>
            <person name="Sinclair B."/>
            <person name="Sperling S."/>
            <person name="Stupka E."/>
            <person name="Sugiura K."/>
            <person name="Sultana R."/>
            <person name="Takenaka Y."/>
            <person name="Taki K."/>
            <person name="Tammoja K."/>
            <person name="Tan S.L."/>
            <person name="Tang S."/>
            <person name="Taylor M.S."/>
            <person name="Tegner J."/>
            <person name="Teichmann S.A."/>
            <person name="Ueda H.R."/>
            <person name="van Nimwegen E."/>
            <person name="Verardo R."/>
            <person name="Wei C.L."/>
            <person name="Yagi K."/>
            <person name="Yamanishi H."/>
            <person name="Zabarovsky E."/>
            <person name="Zhu S."/>
            <person name="Zimmer A."/>
            <person name="Hide W."/>
            <person name="Bult C."/>
            <person name="Grimmond S.M."/>
            <person name="Teasdale R.D."/>
            <person name="Liu E.T."/>
            <person name="Brusic V."/>
            <person name="Quackenbush J."/>
            <person name="Wahlestedt C."/>
            <person name="Mattick J.S."/>
            <person name="Hume D.A."/>
            <person name="Kai C."/>
            <person name="Sasaki D."/>
            <person name="Tomaru Y."/>
            <person name="Fukuda S."/>
            <person name="Kanamori-Katayama M."/>
            <person name="Suzuki M."/>
            <person name="Aoki J."/>
            <person name="Arakawa T."/>
            <person name="Iida J."/>
            <person name="Imamura K."/>
            <person name="Itoh M."/>
            <person name="Kato T."/>
            <person name="Kawaji H."/>
            <person name="Kawagashira N."/>
            <person name="Kawashima T."/>
            <person name="Kojima M."/>
            <person name="Kondo S."/>
            <person name="Konno H."/>
            <person name="Nakano K."/>
            <person name="Ninomiya N."/>
            <person name="Nishio T."/>
            <person name="Okada M."/>
            <person name="Plessy C."/>
            <person name="Shibata K."/>
            <person name="Shiraki T."/>
            <person name="Suzuki S."/>
            <person name="Tagami M."/>
            <person name="Waki K."/>
            <person name="Watahiki A."/>
            <person name="Okamura-Oho Y."/>
            <person name="Suzuki H."/>
            <person name="Kawai J."/>
            <person name="Hayashizaki Y."/>
        </authorList>
    </citation>
    <scope>NUCLEOTIDE SEQUENCE [LARGE SCALE MRNA]</scope>
    <source>
        <strain>C57BL/6J</strain>
        <strain>DBA/2J</strain>
        <tissue>Cerebellum</tissue>
        <tissue>Embryonic lung</tissue>
        <tissue>Testis</tissue>
    </source>
</reference>
<reference key="2">
    <citation type="journal article" date="2009" name="PLoS Biol.">
        <title>Lineage-specific biology revealed by a finished genome assembly of the mouse.</title>
        <authorList>
            <person name="Church D.M."/>
            <person name="Goodstadt L."/>
            <person name="Hillier L.W."/>
            <person name="Zody M.C."/>
            <person name="Goldstein S."/>
            <person name="She X."/>
            <person name="Bult C.J."/>
            <person name="Agarwala R."/>
            <person name="Cherry J.L."/>
            <person name="DiCuccio M."/>
            <person name="Hlavina W."/>
            <person name="Kapustin Y."/>
            <person name="Meric P."/>
            <person name="Maglott D."/>
            <person name="Birtle Z."/>
            <person name="Marques A.C."/>
            <person name="Graves T."/>
            <person name="Zhou S."/>
            <person name="Teague B."/>
            <person name="Potamousis K."/>
            <person name="Churas C."/>
            <person name="Place M."/>
            <person name="Herschleb J."/>
            <person name="Runnheim R."/>
            <person name="Forrest D."/>
            <person name="Amos-Landgraf J."/>
            <person name="Schwartz D.C."/>
            <person name="Cheng Z."/>
            <person name="Lindblad-Toh K."/>
            <person name="Eichler E.E."/>
            <person name="Ponting C.P."/>
        </authorList>
    </citation>
    <scope>NUCLEOTIDE SEQUENCE [LARGE SCALE GENOMIC DNA]</scope>
    <source>
        <strain>C57BL/6J</strain>
    </source>
</reference>
<reference key="3">
    <citation type="journal article" date="2004" name="Genome Res.">
        <title>The status, quality, and expansion of the NIH full-length cDNA project: the Mammalian Gene Collection (MGC).</title>
        <authorList>
            <consortium name="The MGC Project Team"/>
        </authorList>
    </citation>
    <scope>NUCLEOTIDE SEQUENCE [LARGE SCALE MRNA]</scope>
    <source>
        <tissue>Kidney</tissue>
    </source>
</reference>
<reference key="4">
    <citation type="journal article" date="2013" name="Cell">
        <title>Dynamic readers for 5-(hydroxy)methylcytosine and its oxidized derivatives.</title>
        <authorList>
            <person name="Spruijt C.G."/>
            <person name="Gnerlich F."/>
            <person name="Smits A.H."/>
            <person name="Pfaffeneder T."/>
            <person name="Jansen P.W."/>
            <person name="Bauer C."/>
            <person name="Munzel M."/>
            <person name="Wagner M."/>
            <person name="Muller M."/>
            <person name="Khan F."/>
            <person name="Eberl H.C."/>
            <person name="Mensinga A."/>
            <person name="Brinkman A.B."/>
            <person name="Lephikov K."/>
            <person name="Muller U."/>
            <person name="Walter J."/>
            <person name="Boelens R."/>
            <person name="van Ingen H."/>
            <person name="Leonhardt H."/>
            <person name="Carell T."/>
            <person name="Vermeulen M."/>
        </authorList>
    </citation>
    <scope>FUNCTION</scope>
</reference>
<gene>
    <name type="primary">Mgme1</name>
</gene>
<keyword id="KW-0227">DNA damage</keyword>
<keyword id="KW-0234">DNA repair</keyword>
<keyword id="KW-0269">Exonuclease</keyword>
<keyword id="KW-0378">Hydrolase</keyword>
<keyword id="KW-0496">Mitochondrion</keyword>
<keyword id="KW-0540">Nuclease</keyword>
<keyword id="KW-1185">Reference proteome</keyword>
<keyword id="KW-0809">Transit peptide</keyword>